<proteinExistence type="inferred from homology"/>
<comment type="function">
    <text evidence="1">Essential for the assembly of the photosystem I (PSI) complex. May act as a chaperone-like factor to guide the assembly of the PSI subunits.</text>
</comment>
<comment type="subcellular location">
    <subcellularLocation>
        <location evidence="1">Cellular thylakoid membrane</location>
        <topology evidence="1">Peripheral membrane protein</topology>
    </subcellularLocation>
</comment>
<comment type="similarity">
    <text evidence="1">Belongs to the Ycf3 family.</text>
</comment>
<sequence>MPRTQNKDNFIDKTFTVMADLIVKMMPINDKAKRAYVYYRDGLSAQNAGDYAEALENYEESLKLEESPFDRSETLKNMAIIYMSNGDEDLALDTYQRALDQNSNQPSCLKNMGLIYEKRGRTAQEAGLQDEADRLFDRAADVWTQAVRLYPGGYLDIENWLKTTGRSNIDVYF</sequence>
<accession>Q7V4G0</accession>
<organism>
    <name type="scientific">Prochlorococcus marinus (strain MIT 9313)</name>
    <dbReference type="NCBI Taxonomy" id="74547"/>
    <lineage>
        <taxon>Bacteria</taxon>
        <taxon>Bacillati</taxon>
        <taxon>Cyanobacteriota</taxon>
        <taxon>Cyanophyceae</taxon>
        <taxon>Synechococcales</taxon>
        <taxon>Prochlorococcaceae</taxon>
        <taxon>Prochlorococcus</taxon>
    </lineage>
</organism>
<protein>
    <recommendedName>
        <fullName evidence="1">Photosystem I assembly protein Ycf3</fullName>
    </recommendedName>
</protein>
<evidence type="ECO:0000255" key="1">
    <source>
        <dbReference type="HAMAP-Rule" id="MF_00439"/>
    </source>
</evidence>
<gene>
    <name evidence="1" type="primary">ycf3</name>
    <name type="ordered locus">PMT_1992</name>
</gene>
<name>YCF3_PROMM</name>
<keyword id="KW-0472">Membrane</keyword>
<keyword id="KW-0602">Photosynthesis</keyword>
<keyword id="KW-1185">Reference proteome</keyword>
<keyword id="KW-0677">Repeat</keyword>
<keyword id="KW-0793">Thylakoid</keyword>
<keyword id="KW-0802">TPR repeat</keyword>
<dbReference type="EMBL" id="BX548175">
    <property type="protein sequence ID" value="CAE22166.1"/>
    <property type="molecule type" value="Genomic_DNA"/>
</dbReference>
<dbReference type="RefSeq" id="WP_011131357.1">
    <property type="nucleotide sequence ID" value="NC_005071.1"/>
</dbReference>
<dbReference type="SMR" id="Q7V4G0"/>
<dbReference type="KEGG" id="pmt:PMT_1992"/>
<dbReference type="eggNOG" id="COG3063">
    <property type="taxonomic scope" value="Bacteria"/>
</dbReference>
<dbReference type="HOGENOM" id="CLU_141248_0_0_3"/>
<dbReference type="OrthoDB" id="9429505at2"/>
<dbReference type="Proteomes" id="UP000001423">
    <property type="component" value="Chromosome"/>
</dbReference>
<dbReference type="GO" id="GO:0031676">
    <property type="term" value="C:plasma membrane-derived thylakoid membrane"/>
    <property type="evidence" value="ECO:0007669"/>
    <property type="project" value="UniProtKB-SubCell"/>
</dbReference>
<dbReference type="GO" id="GO:0015979">
    <property type="term" value="P:photosynthesis"/>
    <property type="evidence" value="ECO:0007669"/>
    <property type="project" value="UniProtKB-UniRule"/>
</dbReference>
<dbReference type="Gene3D" id="1.25.40.10">
    <property type="entry name" value="Tetratricopeptide repeat domain"/>
    <property type="match status" value="1"/>
</dbReference>
<dbReference type="HAMAP" id="MF_00439">
    <property type="entry name" value="Ycf3"/>
    <property type="match status" value="1"/>
</dbReference>
<dbReference type="InterPro" id="IPR022818">
    <property type="entry name" value="PSI_Ycf3_assembly"/>
</dbReference>
<dbReference type="InterPro" id="IPR011990">
    <property type="entry name" value="TPR-like_helical_dom_sf"/>
</dbReference>
<dbReference type="InterPro" id="IPR019734">
    <property type="entry name" value="TPR_rpt"/>
</dbReference>
<dbReference type="NCBIfam" id="NF002725">
    <property type="entry name" value="PRK02603.1"/>
    <property type="match status" value="1"/>
</dbReference>
<dbReference type="Pfam" id="PF13424">
    <property type="entry name" value="TPR_12"/>
    <property type="match status" value="1"/>
</dbReference>
<dbReference type="SMART" id="SM00028">
    <property type="entry name" value="TPR"/>
    <property type="match status" value="2"/>
</dbReference>
<dbReference type="SUPFAM" id="SSF48452">
    <property type="entry name" value="TPR-like"/>
    <property type="match status" value="1"/>
</dbReference>
<dbReference type="PROSITE" id="PS50005">
    <property type="entry name" value="TPR"/>
    <property type="match status" value="2"/>
</dbReference>
<dbReference type="PROSITE" id="PS50293">
    <property type="entry name" value="TPR_REGION"/>
    <property type="match status" value="1"/>
</dbReference>
<reference key="1">
    <citation type="journal article" date="2003" name="Nature">
        <title>Genome divergence in two Prochlorococcus ecotypes reflects oceanic niche differentiation.</title>
        <authorList>
            <person name="Rocap G."/>
            <person name="Larimer F.W."/>
            <person name="Lamerdin J.E."/>
            <person name="Malfatti S."/>
            <person name="Chain P."/>
            <person name="Ahlgren N.A."/>
            <person name="Arellano A."/>
            <person name="Coleman M."/>
            <person name="Hauser L."/>
            <person name="Hess W.R."/>
            <person name="Johnson Z.I."/>
            <person name="Land M.L."/>
            <person name="Lindell D."/>
            <person name="Post A.F."/>
            <person name="Regala W."/>
            <person name="Shah M."/>
            <person name="Shaw S.L."/>
            <person name="Steglich C."/>
            <person name="Sullivan M.B."/>
            <person name="Ting C.S."/>
            <person name="Tolonen A."/>
            <person name="Webb E.A."/>
            <person name="Zinser E.R."/>
            <person name="Chisholm S.W."/>
        </authorList>
    </citation>
    <scope>NUCLEOTIDE SEQUENCE [LARGE SCALE GENOMIC DNA]</scope>
    <source>
        <strain>MIT 9313</strain>
    </source>
</reference>
<feature type="chain" id="PRO_0000217830" description="Photosystem I assembly protein Ycf3">
    <location>
        <begin position="1"/>
        <end position="173"/>
    </location>
</feature>
<feature type="repeat" description="TPR 1">
    <location>
        <begin position="35"/>
        <end position="68"/>
    </location>
</feature>
<feature type="repeat" description="TPR 2">
    <location>
        <begin position="72"/>
        <end position="105"/>
    </location>
</feature>
<feature type="repeat" description="TPR 3">
    <location>
        <begin position="120"/>
        <end position="153"/>
    </location>
</feature>